<keyword id="KW-0143">Chaperone</keyword>
<keyword id="KW-0963">Cytoplasm</keyword>
<keyword id="KW-0533">Nickel</keyword>
<evidence type="ECO:0000255" key="1">
    <source>
        <dbReference type="HAMAP-Rule" id="MF_00822"/>
    </source>
</evidence>
<reference key="1">
    <citation type="journal article" date="2008" name="PLoS Genet.">
        <title>Complete genome sequence of the N2-fixing broad host range endophyte Klebsiella pneumoniae 342 and virulence predictions verified in mice.</title>
        <authorList>
            <person name="Fouts D.E."/>
            <person name="Tyler H.L."/>
            <person name="DeBoy R.T."/>
            <person name="Daugherty S."/>
            <person name="Ren Q."/>
            <person name="Badger J.H."/>
            <person name="Durkin A.S."/>
            <person name="Huot H."/>
            <person name="Shrivastava S."/>
            <person name="Kothari S."/>
            <person name="Dodson R.J."/>
            <person name="Mohamoud Y."/>
            <person name="Khouri H."/>
            <person name="Roesch L.F.W."/>
            <person name="Krogfelt K.A."/>
            <person name="Struve C."/>
            <person name="Triplett E.W."/>
            <person name="Methe B.A."/>
        </authorList>
    </citation>
    <scope>NUCLEOTIDE SEQUENCE [LARGE SCALE GENOMIC DNA]</scope>
    <source>
        <strain>342</strain>
    </source>
</reference>
<proteinExistence type="inferred from homology"/>
<gene>
    <name evidence="1" type="primary">ureE</name>
    <name type="ordered locus">KPK_0651</name>
</gene>
<protein>
    <recommendedName>
        <fullName evidence="1">Urease accessory protein UreE</fullName>
    </recommendedName>
</protein>
<organism>
    <name type="scientific">Klebsiella pneumoniae (strain 342)</name>
    <dbReference type="NCBI Taxonomy" id="507522"/>
    <lineage>
        <taxon>Bacteria</taxon>
        <taxon>Pseudomonadati</taxon>
        <taxon>Pseudomonadota</taxon>
        <taxon>Gammaproteobacteria</taxon>
        <taxon>Enterobacterales</taxon>
        <taxon>Enterobacteriaceae</taxon>
        <taxon>Klebsiella/Raoultella group</taxon>
        <taxon>Klebsiella</taxon>
        <taxon>Klebsiella pneumoniae complex</taxon>
    </lineage>
</organism>
<accession>B5XU26</accession>
<dbReference type="EMBL" id="CP000964">
    <property type="protein sequence ID" value="ACI11666.1"/>
    <property type="molecule type" value="Genomic_DNA"/>
</dbReference>
<dbReference type="SMR" id="B5XU26"/>
<dbReference type="KEGG" id="kpe:KPK_0651"/>
<dbReference type="HOGENOM" id="CLU_093757_2_0_6"/>
<dbReference type="Proteomes" id="UP000001734">
    <property type="component" value="Chromosome"/>
</dbReference>
<dbReference type="GO" id="GO:0005737">
    <property type="term" value="C:cytoplasm"/>
    <property type="evidence" value="ECO:0007669"/>
    <property type="project" value="UniProtKB-SubCell"/>
</dbReference>
<dbReference type="GO" id="GO:0016151">
    <property type="term" value="F:nickel cation binding"/>
    <property type="evidence" value="ECO:0007669"/>
    <property type="project" value="UniProtKB-UniRule"/>
</dbReference>
<dbReference type="GO" id="GO:0051082">
    <property type="term" value="F:unfolded protein binding"/>
    <property type="evidence" value="ECO:0007669"/>
    <property type="project" value="UniProtKB-UniRule"/>
</dbReference>
<dbReference type="GO" id="GO:0006457">
    <property type="term" value="P:protein folding"/>
    <property type="evidence" value="ECO:0007669"/>
    <property type="project" value="InterPro"/>
</dbReference>
<dbReference type="GO" id="GO:0065003">
    <property type="term" value="P:protein-containing complex assembly"/>
    <property type="evidence" value="ECO:0007669"/>
    <property type="project" value="InterPro"/>
</dbReference>
<dbReference type="GO" id="GO:0019627">
    <property type="term" value="P:urea metabolic process"/>
    <property type="evidence" value="ECO:0007669"/>
    <property type="project" value="InterPro"/>
</dbReference>
<dbReference type="CDD" id="cd00571">
    <property type="entry name" value="UreE"/>
    <property type="match status" value="1"/>
</dbReference>
<dbReference type="Gene3D" id="2.60.260.20">
    <property type="entry name" value="Urease metallochaperone UreE, N-terminal domain"/>
    <property type="match status" value="1"/>
</dbReference>
<dbReference type="Gene3D" id="3.30.70.790">
    <property type="entry name" value="UreE, C-terminal domain"/>
    <property type="match status" value="1"/>
</dbReference>
<dbReference type="HAMAP" id="MF_00822">
    <property type="entry name" value="UreE"/>
    <property type="match status" value="1"/>
</dbReference>
<dbReference type="InterPro" id="IPR012406">
    <property type="entry name" value="UreE"/>
</dbReference>
<dbReference type="InterPro" id="IPR007864">
    <property type="entry name" value="UreE_C_dom"/>
</dbReference>
<dbReference type="InterPro" id="IPR004029">
    <property type="entry name" value="UreE_N"/>
</dbReference>
<dbReference type="InterPro" id="IPR036118">
    <property type="entry name" value="UreE_N_sf"/>
</dbReference>
<dbReference type="NCBIfam" id="NF009751">
    <property type="entry name" value="PRK13261.1-1"/>
    <property type="match status" value="1"/>
</dbReference>
<dbReference type="Pfam" id="PF05194">
    <property type="entry name" value="UreE_C"/>
    <property type="match status" value="1"/>
</dbReference>
<dbReference type="Pfam" id="PF02814">
    <property type="entry name" value="UreE_N"/>
    <property type="match status" value="1"/>
</dbReference>
<dbReference type="PIRSF" id="PIRSF036402">
    <property type="entry name" value="Ureas_acces_UreE"/>
    <property type="match status" value="1"/>
</dbReference>
<dbReference type="SMART" id="SM00988">
    <property type="entry name" value="UreE_N"/>
    <property type="match status" value="1"/>
</dbReference>
<dbReference type="SUPFAM" id="SSF69737">
    <property type="entry name" value="Urease metallochaperone UreE, C-terminal domain"/>
    <property type="match status" value="1"/>
</dbReference>
<dbReference type="SUPFAM" id="SSF69287">
    <property type="entry name" value="Urease metallochaperone UreE, N-terminal domain"/>
    <property type="match status" value="1"/>
</dbReference>
<feature type="chain" id="PRO_1000197440" description="Urease accessory protein UreE">
    <location>
        <begin position="1"/>
        <end position="158"/>
    </location>
</feature>
<sequence>MLYLTQRLETPAAATASVTLPIDVRVKSRVKVTLNDGREAGLLLPRGLLLRGGDVLSNEEGTEFVQVIAADEGVSVVRCDDPFMLAKACYHLGNRHVPLQIMPGELRYHHDHVLDDMLRQFGLTVTFGQLPFEPEAGAYASESHGHHHAHHAHHAHSH</sequence>
<name>UREE_KLEP3</name>
<comment type="function">
    <text evidence="1">Involved in urease metallocenter assembly. Binds nickel. Probably functions as a nickel donor during metallocenter assembly.</text>
</comment>
<comment type="subcellular location">
    <subcellularLocation>
        <location evidence="1">Cytoplasm</location>
    </subcellularLocation>
</comment>
<comment type="similarity">
    <text evidence="1">Belongs to the UreE family.</text>
</comment>